<evidence type="ECO:0000250" key="1"/>
<evidence type="ECO:0000255" key="2">
    <source>
        <dbReference type="HAMAP-Rule" id="MF_00610"/>
    </source>
</evidence>
<keyword id="KW-0150">Chloroplast</keyword>
<keyword id="KW-0249">Electron transport</keyword>
<keyword id="KW-0349">Heme</keyword>
<keyword id="KW-0408">Iron</keyword>
<keyword id="KW-0472">Membrane</keyword>
<keyword id="KW-0479">Metal-binding</keyword>
<keyword id="KW-0602">Photosynthesis</keyword>
<keyword id="KW-0934">Plastid</keyword>
<keyword id="KW-0732">Signal</keyword>
<keyword id="KW-0793">Thylakoid</keyword>
<keyword id="KW-0812">Transmembrane</keyword>
<keyword id="KW-1133">Transmembrane helix</keyword>
<keyword id="KW-0813">Transport</keyword>
<organism>
    <name type="scientific">Nasturtium officinale</name>
    <name type="common">Watercress</name>
    <name type="synonym">Rorippa nasturtium-aquaticum</name>
    <dbReference type="NCBI Taxonomy" id="65948"/>
    <lineage>
        <taxon>Eukaryota</taxon>
        <taxon>Viridiplantae</taxon>
        <taxon>Streptophyta</taxon>
        <taxon>Embryophyta</taxon>
        <taxon>Tracheophyta</taxon>
        <taxon>Spermatophyta</taxon>
        <taxon>Magnoliopsida</taxon>
        <taxon>eudicotyledons</taxon>
        <taxon>Gunneridae</taxon>
        <taxon>Pentapetalae</taxon>
        <taxon>rosids</taxon>
        <taxon>malvids</taxon>
        <taxon>Brassicales</taxon>
        <taxon>Brassicaceae</taxon>
        <taxon>Cardamineae</taxon>
        <taxon>Nasturtium</taxon>
    </lineage>
</organism>
<reference key="1">
    <citation type="submission" date="2007-03" db="EMBL/GenBank/DDBJ databases">
        <title>Sequencing analysis of Nasturtium officinale chloroplast DNA.</title>
        <authorList>
            <person name="Hosouchi T."/>
            <person name="Tsuruoka H."/>
            <person name="Kotani H."/>
        </authorList>
    </citation>
    <scope>NUCLEOTIDE SEQUENCE [LARGE SCALE GENOMIC DNA]</scope>
</reference>
<accession>A4QLU6</accession>
<comment type="function">
    <text evidence="2">Component of the cytochrome b6-f complex, which mediates electron transfer between photosystem II (PSII) and photosystem I (PSI), cyclic electron flow around PSI, and state transitions.</text>
</comment>
<comment type="cofactor">
    <cofactor evidence="2">
        <name>heme</name>
        <dbReference type="ChEBI" id="CHEBI:30413"/>
    </cofactor>
    <text evidence="2">Binds 1 heme group covalently.</text>
</comment>
<comment type="subunit">
    <text evidence="1">The 4 large subunits of the cytochrome b6-f complex are cytochrome b6, subunit IV (17 kDa polypeptide, petD), cytochrome f and the Rieske protein, while the 4 small subunits are PetG, PetL, PetM and PetN. The complex functions as a dimer (By similarity).</text>
</comment>
<comment type="subcellular location">
    <subcellularLocation>
        <location evidence="2">Plastid</location>
        <location evidence="2">Chloroplast thylakoid membrane</location>
        <topology evidence="2">Single-pass membrane protein</topology>
    </subcellularLocation>
</comment>
<comment type="similarity">
    <text evidence="2">Belongs to the cytochrome f family.</text>
</comment>
<dbReference type="EMBL" id="AP009376">
    <property type="protein sequence ID" value="BAF50651.1"/>
    <property type="molecule type" value="Genomic_DNA"/>
</dbReference>
<dbReference type="RefSeq" id="YP_001123827.1">
    <property type="nucleotide sequence ID" value="NC_009275.1"/>
</dbReference>
<dbReference type="SMR" id="A4QLU6"/>
<dbReference type="GeneID" id="4962201"/>
<dbReference type="GO" id="GO:0009535">
    <property type="term" value="C:chloroplast thylakoid membrane"/>
    <property type="evidence" value="ECO:0007669"/>
    <property type="project" value="UniProtKB-SubCell"/>
</dbReference>
<dbReference type="GO" id="GO:0009055">
    <property type="term" value="F:electron transfer activity"/>
    <property type="evidence" value="ECO:0007669"/>
    <property type="project" value="UniProtKB-UniRule"/>
</dbReference>
<dbReference type="GO" id="GO:0020037">
    <property type="term" value="F:heme binding"/>
    <property type="evidence" value="ECO:0007669"/>
    <property type="project" value="InterPro"/>
</dbReference>
<dbReference type="GO" id="GO:0005506">
    <property type="term" value="F:iron ion binding"/>
    <property type="evidence" value="ECO:0007669"/>
    <property type="project" value="InterPro"/>
</dbReference>
<dbReference type="GO" id="GO:0015979">
    <property type="term" value="P:photosynthesis"/>
    <property type="evidence" value="ECO:0007669"/>
    <property type="project" value="UniProtKB-UniRule"/>
</dbReference>
<dbReference type="FunFam" id="1.20.5.700:FF:000001">
    <property type="entry name" value="Cytochrome f"/>
    <property type="match status" value="1"/>
</dbReference>
<dbReference type="FunFam" id="2.40.50.100:FF:000007">
    <property type="entry name" value="Cytochrome f"/>
    <property type="match status" value="1"/>
</dbReference>
<dbReference type="FunFam" id="2.60.40.830:FF:000001">
    <property type="entry name" value="Cytochrome f"/>
    <property type="match status" value="1"/>
</dbReference>
<dbReference type="Gene3D" id="2.40.50.100">
    <property type="match status" value="1"/>
</dbReference>
<dbReference type="Gene3D" id="2.60.40.830">
    <property type="entry name" value="Cytochrome f large domain"/>
    <property type="match status" value="1"/>
</dbReference>
<dbReference type="Gene3D" id="1.20.5.700">
    <property type="entry name" value="Single helix bin"/>
    <property type="match status" value="1"/>
</dbReference>
<dbReference type="HAMAP" id="MF_00610">
    <property type="entry name" value="Cytb6_f_cytF"/>
    <property type="match status" value="1"/>
</dbReference>
<dbReference type="InterPro" id="IPR024058">
    <property type="entry name" value="Cyt-f_TM"/>
</dbReference>
<dbReference type="InterPro" id="IPR002325">
    <property type="entry name" value="Cyt_f"/>
</dbReference>
<dbReference type="InterPro" id="IPR024094">
    <property type="entry name" value="Cyt_f_lg_dom"/>
</dbReference>
<dbReference type="InterPro" id="IPR036826">
    <property type="entry name" value="Cyt_f_lg_dom_sf"/>
</dbReference>
<dbReference type="InterPro" id="IPR011054">
    <property type="entry name" value="Rudment_hybrid_motif"/>
</dbReference>
<dbReference type="PANTHER" id="PTHR33288">
    <property type="match status" value="1"/>
</dbReference>
<dbReference type="PANTHER" id="PTHR33288:SF10">
    <property type="entry name" value="CYTOCHROME F"/>
    <property type="match status" value="1"/>
</dbReference>
<dbReference type="Pfam" id="PF01333">
    <property type="entry name" value="Apocytochr_F_C"/>
    <property type="match status" value="1"/>
</dbReference>
<dbReference type="Pfam" id="PF16639">
    <property type="entry name" value="Apocytochr_F_N"/>
    <property type="match status" value="1"/>
</dbReference>
<dbReference type="PRINTS" id="PR00610">
    <property type="entry name" value="CYTOCHROMEF"/>
</dbReference>
<dbReference type="SUPFAM" id="SSF103431">
    <property type="entry name" value="Cytochrome f subunit of the cytochrome b6f complex, transmembrane anchor"/>
    <property type="match status" value="1"/>
</dbReference>
<dbReference type="SUPFAM" id="SSF49441">
    <property type="entry name" value="Cytochrome f, large domain"/>
    <property type="match status" value="1"/>
</dbReference>
<dbReference type="SUPFAM" id="SSF51246">
    <property type="entry name" value="Rudiment single hybrid motif"/>
    <property type="match status" value="1"/>
</dbReference>
<dbReference type="PROSITE" id="PS51010">
    <property type="entry name" value="CYTF"/>
    <property type="match status" value="1"/>
</dbReference>
<geneLocation type="chloroplast"/>
<name>CYF_NASOF</name>
<proteinExistence type="inferred from homology"/>
<protein>
    <recommendedName>
        <fullName evidence="2">Cytochrome f</fullName>
    </recommendedName>
</protein>
<feature type="signal peptide" evidence="2">
    <location>
        <begin position="1"/>
        <end position="35"/>
    </location>
</feature>
<feature type="chain" id="PRO_0000342074" description="Cytochrome f">
    <location>
        <begin position="36"/>
        <end position="320"/>
    </location>
</feature>
<feature type="transmembrane region" description="Helical" evidence="2">
    <location>
        <begin position="286"/>
        <end position="306"/>
    </location>
</feature>
<feature type="binding site" description="axial binding residue" evidence="2">
    <location>
        <position position="36"/>
    </location>
    <ligand>
        <name>heme</name>
        <dbReference type="ChEBI" id="CHEBI:30413"/>
    </ligand>
    <ligandPart>
        <name>Fe</name>
        <dbReference type="ChEBI" id="CHEBI:18248"/>
    </ligandPart>
</feature>
<feature type="binding site" description="covalent" evidence="2">
    <location>
        <position position="56"/>
    </location>
    <ligand>
        <name>heme</name>
        <dbReference type="ChEBI" id="CHEBI:30413"/>
    </ligand>
</feature>
<feature type="binding site" description="covalent" evidence="2">
    <location>
        <position position="59"/>
    </location>
    <ligand>
        <name>heme</name>
        <dbReference type="ChEBI" id="CHEBI:30413"/>
    </ligand>
</feature>
<feature type="binding site" description="axial binding residue" evidence="2">
    <location>
        <position position="60"/>
    </location>
    <ligand>
        <name>heme</name>
        <dbReference type="ChEBI" id="CHEBI:30413"/>
    </ligand>
    <ligandPart>
        <name>Fe</name>
        <dbReference type="ChEBI" id="CHEBI:18248"/>
    </ligandPart>
</feature>
<gene>
    <name evidence="2" type="primary">petA</name>
</gene>
<sequence>MQTRNTFSWIREEITRSISVSLMIYIITWASISSAYPIFAQQNYENPREATGRIVCANCHLANKPVDIEVPQTVLPDTVFEAVVKIPYDMQLKQVLANGKKGALNVGAVLILPEGFELAPPDRISPEMKEKIGNLSFQNYRPDKKNILVIGPVPGQKYSEITFPILAPDPATNKDVHFLKYPIYVGGNRGRGQIYPDGSKSNNTVYNATAGGIISKILRKEKGGYEITIVDASNERQVIDIIPRGLELLVSEGESIKLDQPLTSNPNVGGFGQGDAEIVLQDPLRVQGLLFFLGSVVLAQIFLVLKKKQFEKVQLSEMNF</sequence>